<dbReference type="EC" id="4.99.1.9" evidence="1"/>
<dbReference type="EMBL" id="CP000046">
    <property type="protein sequence ID" value="AAW36901.1"/>
    <property type="molecule type" value="Genomic_DNA"/>
</dbReference>
<dbReference type="SMR" id="Q5HEU3"/>
<dbReference type="KEGG" id="sac:SACOL1888"/>
<dbReference type="HOGENOM" id="CLU_018884_2_1_9"/>
<dbReference type="UniPathway" id="UPA00252"/>
<dbReference type="Proteomes" id="UP000000530">
    <property type="component" value="Chromosome"/>
</dbReference>
<dbReference type="GO" id="GO:0005737">
    <property type="term" value="C:cytoplasm"/>
    <property type="evidence" value="ECO:0007669"/>
    <property type="project" value="UniProtKB-SubCell"/>
</dbReference>
<dbReference type="GO" id="GO:0004325">
    <property type="term" value="F:ferrochelatase activity"/>
    <property type="evidence" value="ECO:0007669"/>
    <property type="project" value="UniProtKB-UniRule"/>
</dbReference>
<dbReference type="GO" id="GO:0046872">
    <property type="term" value="F:metal ion binding"/>
    <property type="evidence" value="ECO:0007669"/>
    <property type="project" value="UniProtKB-KW"/>
</dbReference>
<dbReference type="GO" id="GO:0006783">
    <property type="term" value="P:heme biosynthetic process"/>
    <property type="evidence" value="ECO:0007669"/>
    <property type="project" value="UniProtKB-UniRule"/>
</dbReference>
<dbReference type="CDD" id="cd00419">
    <property type="entry name" value="Ferrochelatase_C"/>
    <property type="match status" value="1"/>
</dbReference>
<dbReference type="CDD" id="cd03411">
    <property type="entry name" value="Ferrochelatase_N"/>
    <property type="match status" value="1"/>
</dbReference>
<dbReference type="FunFam" id="3.40.50.1400:FF:000009">
    <property type="entry name" value="Ferrochelatase"/>
    <property type="match status" value="1"/>
</dbReference>
<dbReference type="Gene3D" id="3.40.50.1400">
    <property type="match status" value="2"/>
</dbReference>
<dbReference type="HAMAP" id="MF_00323">
    <property type="entry name" value="Ferrochelatase"/>
    <property type="match status" value="1"/>
</dbReference>
<dbReference type="InterPro" id="IPR001015">
    <property type="entry name" value="Ferrochelatase"/>
</dbReference>
<dbReference type="InterPro" id="IPR019772">
    <property type="entry name" value="Ferrochelatase_AS"/>
</dbReference>
<dbReference type="InterPro" id="IPR033644">
    <property type="entry name" value="Ferrochelatase_C"/>
</dbReference>
<dbReference type="InterPro" id="IPR033659">
    <property type="entry name" value="Ferrochelatase_N"/>
</dbReference>
<dbReference type="NCBIfam" id="TIGR00109">
    <property type="entry name" value="hemH"/>
    <property type="match status" value="1"/>
</dbReference>
<dbReference type="NCBIfam" id="NF009095">
    <property type="entry name" value="PRK12435.1"/>
    <property type="match status" value="1"/>
</dbReference>
<dbReference type="PANTHER" id="PTHR11108">
    <property type="entry name" value="FERROCHELATASE"/>
    <property type="match status" value="1"/>
</dbReference>
<dbReference type="PANTHER" id="PTHR11108:SF1">
    <property type="entry name" value="FERROCHELATASE, MITOCHONDRIAL"/>
    <property type="match status" value="1"/>
</dbReference>
<dbReference type="Pfam" id="PF00762">
    <property type="entry name" value="Ferrochelatase"/>
    <property type="match status" value="1"/>
</dbReference>
<dbReference type="SUPFAM" id="SSF53800">
    <property type="entry name" value="Chelatase"/>
    <property type="match status" value="1"/>
</dbReference>
<dbReference type="PROSITE" id="PS00534">
    <property type="entry name" value="FERROCHELATASE"/>
    <property type="match status" value="1"/>
</dbReference>
<reference key="1">
    <citation type="journal article" date="2005" name="J. Bacteriol.">
        <title>Insights on evolution of virulence and resistance from the complete genome analysis of an early methicillin-resistant Staphylococcus aureus strain and a biofilm-producing methicillin-resistant Staphylococcus epidermidis strain.</title>
        <authorList>
            <person name="Gill S.R."/>
            <person name="Fouts D.E."/>
            <person name="Archer G.L."/>
            <person name="Mongodin E.F."/>
            <person name="DeBoy R.T."/>
            <person name="Ravel J."/>
            <person name="Paulsen I.T."/>
            <person name="Kolonay J.F."/>
            <person name="Brinkac L.M."/>
            <person name="Beanan M.J."/>
            <person name="Dodson R.J."/>
            <person name="Daugherty S.C."/>
            <person name="Madupu R."/>
            <person name="Angiuoli S.V."/>
            <person name="Durkin A.S."/>
            <person name="Haft D.H."/>
            <person name="Vamathevan J.J."/>
            <person name="Khouri H."/>
            <person name="Utterback T.R."/>
            <person name="Lee C."/>
            <person name="Dimitrov G."/>
            <person name="Jiang L."/>
            <person name="Qin H."/>
            <person name="Weidman J."/>
            <person name="Tran K."/>
            <person name="Kang K.H."/>
            <person name="Hance I.R."/>
            <person name="Nelson K.E."/>
            <person name="Fraser C.M."/>
        </authorList>
    </citation>
    <scope>NUCLEOTIDE SEQUENCE [LARGE SCALE GENOMIC DNA]</scope>
    <source>
        <strain>COL</strain>
    </source>
</reference>
<gene>
    <name evidence="1" type="primary">cpfC</name>
    <name type="ordered locus">SACOL1888</name>
</gene>
<proteinExistence type="inferred from homology"/>
<feature type="chain" id="PRO_0000175201" description="Coproporphyrin III ferrochelatase">
    <location>
        <begin position="1"/>
        <end position="307"/>
    </location>
</feature>
<feature type="binding site" description="axial binding residue" evidence="1">
    <location>
        <position position="12"/>
    </location>
    <ligand>
        <name>Fe-coproporphyrin III</name>
        <dbReference type="ChEBI" id="CHEBI:68438"/>
    </ligand>
    <ligandPart>
        <name>Fe</name>
        <dbReference type="ChEBI" id="CHEBI:18248"/>
    </ligandPart>
</feature>
<feature type="binding site" evidence="1">
    <location>
        <position position="29"/>
    </location>
    <ligand>
        <name>Fe-coproporphyrin III</name>
        <dbReference type="ChEBI" id="CHEBI:68438"/>
    </ligand>
</feature>
<feature type="binding site" evidence="1">
    <location>
        <begin position="45"/>
        <end position="46"/>
    </location>
    <ligand>
        <name>Fe-coproporphyrin III</name>
        <dbReference type="ChEBI" id="CHEBI:68438"/>
    </ligand>
</feature>
<feature type="binding site" evidence="1">
    <location>
        <position position="53"/>
    </location>
    <ligand>
        <name>Fe-coproporphyrin III</name>
        <dbReference type="ChEBI" id="CHEBI:68438"/>
    </ligand>
</feature>
<feature type="binding site" evidence="1">
    <location>
        <position position="124"/>
    </location>
    <ligand>
        <name>Fe-coproporphyrin III</name>
        <dbReference type="ChEBI" id="CHEBI:68438"/>
    </ligand>
</feature>
<feature type="binding site" evidence="1">
    <location>
        <position position="181"/>
    </location>
    <ligand>
        <name>Fe(2+)</name>
        <dbReference type="ChEBI" id="CHEBI:29033"/>
    </ligand>
</feature>
<feature type="binding site" evidence="1">
    <location>
        <position position="263"/>
    </location>
    <ligand>
        <name>Fe(2+)</name>
        <dbReference type="ChEBI" id="CHEBI:29033"/>
    </ligand>
</feature>
<keyword id="KW-0963">Cytoplasm</keyword>
<keyword id="KW-0350">Heme biosynthesis</keyword>
<keyword id="KW-0408">Iron</keyword>
<keyword id="KW-0456">Lyase</keyword>
<keyword id="KW-0479">Metal-binding</keyword>
<keyword id="KW-0627">Porphyrin biosynthesis</keyword>
<sequence>MTKKMGLLVMAYGTPYKESDIEPYYTDIRHGKRPSEEELQDLKDRYEFIGGLSPLAGTTDDQADALVSALNKAYADVEFKLYLGLKHISPFIEDAVEQMHNDGITEAITVVLAPHYSSFSVGSYDKRADEEAAKYGIQLTHVKHYYEQPKFIEYWTNKVNETLAQIPEEEHKDTVLVVSAHSLPKGLIEKNNDPYPQELEHTALLIKEQSNIEHIAIGWQSEGNTGTPWLGPDVQDLTRDLYEKHQYKNFIYTPVGFVCEHLEVLYDNDYECKVVCDDIGANYYRPKMPNTHPLFIGAIVDEIKSIF</sequence>
<organism>
    <name type="scientific">Staphylococcus aureus (strain COL)</name>
    <dbReference type="NCBI Taxonomy" id="93062"/>
    <lineage>
        <taxon>Bacteria</taxon>
        <taxon>Bacillati</taxon>
        <taxon>Bacillota</taxon>
        <taxon>Bacilli</taxon>
        <taxon>Bacillales</taxon>
        <taxon>Staphylococcaceae</taxon>
        <taxon>Staphylococcus</taxon>
    </lineage>
</organism>
<evidence type="ECO:0000255" key="1">
    <source>
        <dbReference type="HAMAP-Rule" id="MF_00323"/>
    </source>
</evidence>
<accession>Q5HEU3</accession>
<name>CPFC_STAAC</name>
<comment type="function">
    <text evidence="1">Involved in coproporphyrin-dependent heme b biosynthesis. Catalyzes the insertion of ferrous iron into coproporphyrin III to form Fe-coproporphyrin III.</text>
</comment>
<comment type="catalytic activity">
    <reaction evidence="1">
        <text>Fe-coproporphyrin III + 2 H(+) = coproporphyrin III + Fe(2+)</text>
        <dbReference type="Rhea" id="RHEA:49572"/>
        <dbReference type="ChEBI" id="CHEBI:15378"/>
        <dbReference type="ChEBI" id="CHEBI:29033"/>
        <dbReference type="ChEBI" id="CHEBI:68438"/>
        <dbReference type="ChEBI" id="CHEBI:131725"/>
        <dbReference type="EC" id="4.99.1.9"/>
    </reaction>
    <physiologicalReaction direction="right-to-left" evidence="1">
        <dbReference type="Rhea" id="RHEA:49574"/>
    </physiologicalReaction>
</comment>
<comment type="pathway">
    <text evidence="1">Porphyrin-containing compound metabolism; protoheme biosynthesis.</text>
</comment>
<comment type="subcellular location">
    <subcellularLocation>
        <location evidence="1">Cytoplasm</location>
    </subcellularLocation>
</comment>
<comment type="similarity">
    <text evidence="1">Belongs to the ferrochelatase family.</text>
</comment>
<protein>
    <recommendedName>
        <fullName evidence="1">Coproporphyrin III ferrochelatase</fullName>
        <ecNumber evidence="1">4.99.1.9</ecNumber>
    </recommendedName>
</protein>